<reference key="1">
    <citation type="journal article" date="1998" name="J. Virol.">
        <title>Phylogenetic analysis of the entire genome of influenza A (H3N2) viruses from Japan: evidence for genetic reassortment of the six internal genes.</title>
        <authorList>
            <person name="Lindstrom S.E."/>
            <person name="Hiromoto Y."/>
            <person name="Nerome R."/>
            <person name="Omoe K."/>
            <person name="Sugita S."/>
            <person name="Yamazaki Y."/>
            <person name="Takahashi T."/>
            <person name="Nerome K."/>
        </authorList>
    </citation>
    <scope>NUCLEOTIDE SEQUENCE [GENOMIC RNA]</scope>
</reference>
<gene>
    <name evidence="2" type="primary">PA</name>
</gene>
<proteinExistence type="inferred from homology"/>
<protein>
    <recommendedName>
        <fullName evidence="2">Polymerase acidic protein</fullName>
        <ecNumber evidence="2">3.1.-.-</ecNumber>
    </recommendedName>
    <alternativeName>
        <fullName evidence="2">RNA-directed RNA polymerase subunit P2</fullName>
    </alternativeName>
</protein>
<name>PA_I93A0</name>
<dbReference type="EC" id="3.1.-.-" evidence="2"/>
<dbReference type="EMBL" id="AF037424">
    <property type="protein sequence ID" value="AAC63455.1"/>
    <property type="molecule type" value="Genomic_RNA"/>
</dbReference>
<dbReference type="SMR" id="O91742"/>
<dbReference type="MEROPS" id="S62.001"/>
<dbReference type="GO" id="GO:0030430">
    <property type="term" value="C:host cell cytoplasm"/>
    <property type="evidence" value="ECO:0007669"/>
    <property type="project" value="UniProtKB-SubCell"/>
</dbReference>
<dbReference type="GO" id="GO:0042025">
    <property type="term" value="C:host cell nucleus"/>
    <property type="evidence" value="ECO:0007669"/>
    <property type="project" value="UniProtKB-SubCell"/>
</dbReference>
<dbReference type="GO" id="GO:0004519">
    <property type="term" value="F:endonuclease activity"/>
    <property type="evidence" value="ECO:0007669"/>
    <property type="project" value="UniProtKB-KW"/>
</dbReference>
<dbReference type="GO" id="GO:0046872">
    <property type="term" value="F:metal ion binding"/>
    <property type="evidence" value="ECO:0007669"/>
    <property type="project" value="UniProtKB-KW"/>
</dbReference>
<dbReference type="GO" id="GO:0003723">
    <property type="term" value="F:RNA binding"/>
    <property type="evidence" value="ECO:0007669"/>
    <property type="project" value="UniProtKB-UniRule"/>
</dbReference>
<dbReference type="GO" id="GO:0075526">
    <property type="term" value="P:cap snatching"/>
    <property type="evidence" value="ECO:0007669"/>
    <property type="project" value="UniProtKB-UniRule"/>
</dbReference>
<dbReference type="GO" id="GO:0006351">
    <property type="term" value="P:DNA-templated transcription"/>
    <property type="evidence" value="ECO:0007669"/>
    <property type="project" value="UniProtKB-UniRule"/>
</dbReference>
<dbReference type="GO" id="GO:0039657">
    <property type="term" value="P:symbiont-mediated suppression of host gene expression"/>
    <property type="evidence" value="ECO:0007669"/>
    <property type="project" value="UniProtKB-KW"/>
</dbReference>
<dbReference type="GO" id="GO:0039523">
    <property type="term" value="P:symbiont-mediated suppression of host mRNA transcription via inhibition of RNA polymerase II activity"/>
    <property type="evidence" value="ECO:0007669"/>
    <property type="project" value="UniProtKB-UniRule"/>
</dbReference>
<dbReference type="GO" id="GO:0039694">
    <property type="term" value="P:viral RNA genome replication"/>
    <property type="evidence" value="ECO:0007669"/>
    <property type="project" value="InterPro"/>
</dbReference>
<dbReference type="GO" id="GO:0075523">
    <property type="term" value="P:viral translational frameshifting"/>
    <property type="evidence" value="ECO:0007669"/>
    <property type="project" value="UniProtKB-KW"/>
</dbReference>
<dbReference type="FunFam" id="3.40.91.90:FF:000001">
    <property type="entry name" value="Polymerase acidic protein"/>
    <property type="match status" value="1"/>
</dbReference>
<dbReference type="Gene3D" id="3.40.91.90">
    <property type="entry name" value="Influenza RNA-dependent RNA polymerase subunit PA, endonuclease domain"/>
    <property type="match status" value="1"/>
</dbReference>
<dbReference type="HAMAP" id="MF_04063">
    <property type="entry name" value="INFV_PA"/>
    <property type="match status" value="1"/>
</dbReference>
<dbReference type="InterPro" id="IPR037534">
    <property type="entry name" value="INFV_PA"/>
</dbReference>
<dbReference type="InterPro" id="IPR001009">
    <property type="entry name" value="PA/PA-X"/>
</dbReference>
<dbReference type="InterPro" id="IPR038372">
    <property type="entry name" value="PA/PA-X_sf"/>
</dbReference>
<dbReference type="Pfam" id="PF00603">
    <property type="entry name" value="Flu_PA"/>
    <property type="match status" value="1"/>
</dbReference>
<feature type="chain" id="PRO_0000078788" description="Polymerase acidic protein">
    <location>
        <begin position="1"/>
        <end position="716"/>
    </location>
</feature>
<feature type="short sequence motif" description="Nuclear localization signal 1 (NLS1)" evidence="1 2">
    <location>
        <begin position="124"/>
        <end position="139"/>
    </location>
</feature>
<feature type="short sequence motif" description="Nuclear localization signal 2 (NLS2)" evidence="1 2">
    <location>
        <begin position="184"/>
        <end position="247"/>
    </location>
</feature>
<feature type="binding site" evidence="2">
    <location>
        <position position="41"/>
    </location>
    <ligand>
        <name>Mn(2+)</name>
        <dbReference type="ChEBI" id="CHEBI:29035"/>
        <label>1</label>
    </ligand>
</feature>
<feature type="binding site" evidence="2">
    <location>
        <position position="80"/>
    </location>
    <ligand>
        <name>Mn(2+)</name>
        <dbReference type="ChEBI" id="CHEBI:29035"/>
        <label>2</label>
    </ligand>
</feature>
<feature type="binding site" evidence="2">
    <location>
        <position position="108"/>
    </location>
    <ligand>
        <name>Mn(2+)</name>
        <dbReference type="ChEBI" id="CHEBI:29035"/>
        <label>1</label>
    </ligand>
</feature>
<feature type="binding site" evidence="2">
    <location>
        <position position="108"/>
    </location>
    <ligand>
        <name>Mn(2+)</name>
        <dbReference type="ChEBI" id="CHEBI:29035"/>
        <label>2</label>
    </ligand>
</feature>
<feature type="binding site" evidence="2">
    <location>
        <position position="119"/>
    </location>
    <ligand>
        <name>Mn(2+)</name>
        <dbReference type="ChEBI" id="CHEBI:29035"/>
        <label>1</label>
    </ligand>
</feature>
<feature type="binding site" evidence="2">
    <location>
        <position position="120"/>
    </location>
    <ligand>
        <name>Mn(2+)</name>
        <dbReference type="ChEBI" id="CHEBI:29035"/>
        <label>1</label>
    </ligand>
</feature>
<organismHost>
    <name type="scientific">Aves</name>
    <dbReference type="NCBI Taxonomy" id="8782"/>
</organismHost>
<organismHost>
    <name type="scientific">Homo sapiens</name>
    <name type="common">Human</name>
    <dbReference type="NCBI Taxonomy" id="9606"/>
</organismHost>
<organismHost>
    <name type="scientific">Phocidae</name>
    <name type="common">true seals</name>
    <dbReference type="NCBI Taxonomy" id="9709"/>
</organismHost>
<organismHost>
    <name type="scientific">Sus scrofa</name>
    <name type="common">Pig</name>
    <dbReference type="NCBI Taxonomy" id="9823"/>
</organismHost>
<accession>O91742</accession>
<evidence type="ECO:0000250" key="1">
    <source>
        <dbReference type="UniProtKB" id="P03433"/>
    </source>
</evidence>
<evidence type="ECO:0000255" key="2">
    <source>
        <dbReference type="HAMAP-Rule" id="MF_04063"/>
    </source>
</evidence>
<comment type="function">
    <text evidence="2">Plays an essential role in viral RNA transcription and replication by forming the heterotrimeric polymerase complex together with PB1 and PB2 subunits. The complex transcribes viral mRNAs by using a unique mechanism called cap-snatching. It consists in the hijacking and cleavage of host capped pre-mRNAs. These short capped RNAs are then used as primers for viral mRNAs. The PB2 subunit is responsible for the binding of the 5' cap of cellular pre-mRNAs which are subsequently cleaved after 10-13 nucleotides by the PA subunit that carries the endonuclease activity.</text>
</comment>
<comment type="cofactor">
    <cofactor evidence="2">
        <name>Mn(2+)</name>
        <dbReference type="ChEBI" id="CHEBI:29035"/>
    </cofactor>
    <text evidence="2">Binds 2 manganese ions per subunit.</text>
</comment>
<comment type="subunit">
    <text evidence="1 2">Influenza RNA polymerase is composed of three subunits: PB1, PB2 and PA. Interacts (via C-terminus) with PB1 (via N-terminus).</text>
</comment>
<comment type="subcellular location">
    <subcellularLocation>
        <location evidence="2">Host cytoplasm</location>
    </subcellularLocation>
    <subcellularLocation>
        <location evidence="2">Host nucleus</location>
    </subcellularLocation>
    <text evidence="1 2">PB1 and PA are transported in the host nucleus as a complex.</text>
</comment>
<comment type="alternative products">
    <event type="ribosomal frameshifting"/>
    <isoform>
        <id>O91742-1</id>
        <name>PA</name>
        <sequence type="displayed"/>
    </isoform>
    <isoform>
        <id>P0DJS2-1</id>
        <name>PA-X</name>
        <sequence type="external"/>
    </isoform>
</comment>
<comment type="PTM">
    <text evidence="1 2">Phosphorylated on serines and threonines by host kinases, including human casein kinase II.</text>
</comment>
<comment type="similarity">
    <text evidence="2">Belongs to the influenza viruses PA family.</text>
</comment>
<keyword id="KW-1157">Cap snatching</keyword>
<keyword id="KW-0255">Endonuclease</keyword>
<keyword id="KW-1262">Eukaryotic host gene expression shutoff by virus</keyword>
<keyword id="KW-1191">Eukaryotic host transcription shutoff by virus</keyword>
<keyword id="KW-1035">Host cytoplasm</keyword>
<keyword id="KW-1190">Host gene expression shutoff by virus</keyword>
<keyword id="KW-1048">Host nucleus</keyword>
<keyword id="KW-0945">Host-virus interaction</keyword>
<keyword id="KW-0378">Hydrolase</keyword>
<keyword id="KW-1104">Inhibition of host RNA polymerase II by virus</keyword>
<keyword id="KW-0464">Manganese</keyword>
<keyword id="KW-0479">Metal-binding</keyword>
<keyword id="KW-0540">Nuclease</keyword>
<keyword id="KW-0597">Phosphoprotein</keyword>
<keyword id="KW-0688">Ribosomal frameshifting</keyword>
<organism>
    <name type="scientific">Influenza A virus (strain A/Kitakyushu/159/1993 H3N2)</name>
    <dbReference type="NCBI Taxonomy" id="62478"/>
    <lineage>
        <taxon>Viruses</taxon>
        <taxon>Riboviria</taxon>
        <taxon>Orthornavirae</taxon>
        <taxon>Negarnaviricota</taxon>
        <taxon>Polyploviricotina</taxon>
        <taxon>Insthoviricetes</taxon>
        <taxon>Articulavirales</taxon>
        <taxon>Orthomyxoviridae</taxon>
        <taxon>Alphainfluenzavirus</taxon>
        <taxon>Alphainfluenzavirus influenzae</taxon>
        <taxon>Influenza A virus</taxon>
    </lineage>
</organism>
<sequence length="716" mass="82750">MEDFVRQCFNPMIVELAEKAMKEYGEDLKIETNKFAAICTHLEVCFMYSDFHFINEQGESIVVELDDPNALLKHRFEIIEGRDRTMAWTVVNSICNTTGAEKPKFLPDLYDYKENRFIEIGVTRREVHIYYLEKANKIKSENTHIHIFSFTGEEMATKADYTLDEESRARIKTRLFTIRQEMANRGLWDSFRQSERGEETIEEKFEISGTMRRLADQSLPPNFSCLENFRAYVDGFEPNGCIEGKLSQMSKEVNAKIEPFLKTTPRPIKLPNGPPCYQRSKFLLMDALKLSIEDPSHEGEGIPLYDAIKCIRTFFGWKEPYIVKPHEKGINSNYLLSWKQVLAELQDIETEEKIPRTKNMKKTSQLKWALGENMAPEKVDFDNCRDISDLKQYDSDEPELRSLSSWIQNEFNKACELTDSIWIELDEIGEDVAPIEYIASMRRNYFTAEVSHCRATEYIMKGVYINTALLNASCAAMDDFQLIPMISKCRTKEGRRKTNLYGFIIKGRSHLRNDTDVVNFVSMEFSLTDPRLEPHKWEKYCVLEIGDMLLRSAIGQMSRPMFLYVRTNGTSKIKMKWGMEMRRCLLQSLQQIESMIEAESSVKEKDMTKEFFENKSEAWPIGESPKGVEEGSIGKVCRTLLAKSVFNSLYASPQLEGFSAESRKLLLVVQALRDNLEPGTFDLGGLYEAIEECLINDPWVLLNASWFNSFLTHALK</sequence>